<feature type="transit peptide" description="Mitochondrion" evidence="2">
    <location>
        <begin position="1"/>
        <end position="45"/>
    </location>
</feature>
<feature type="chain" id="PRO_0000042815" description="Mitochondrial inner membrane magnesium transporter LPE10">
    <location>
        <begin position="46"/>
        <end position="393"/>
    </location>
</feature>
<feature type="transmembrane region" description="Helical" evidence="2">
    <location>
        <begin position="323"/>
        <end position="343"/>
    </location>
</feature>
<feature type="transmembrane region" description="Helical" evidence="2">
    <location>
        <begin position="350"/>
        <end position="370"/>
    </location>
</feature>
<feature type="short sequence motif" description="YGMN">
    <location>
        <begin position="340"/>
        <end position="343"/>
    </location>
</feature>
<name>LPE10_EREGS</name>
<reference key="1">
    <citation type="journal article" date="2004" name="Science">
        <title>The Ashbya gossypii genome as a tool for mapping the ancient Saccharomyces cerevisiae genome.</title>
        <authorList>
            <person name="Dietrich F.S."/>
            <person name="Voegeli S."/>
            <person name="Brachat S."/>
            <person name="Lerch A."/>
            <person name="Gates K."/>
            <person name="Steiner S."/>
            <person name="Mohr C."/>
            <person name="Poehlmann R."/>
            <person name="Luedi P."/>
            <person name="Choi S."/>
            <person name="Wing R.A."/>
            <person name="Flavier A."/>
            <person name="Gaffney T.D."/>
            <person name="Philippsen P."/>
        </authorList>
    </citation>
    <scope>NUCLEOTIDE SEQUENCE [LARGE SCALE GENOMIC DNA]</scope>
    <source>
        <strain>ATCC 10895 / CBS 109.51 / FGSC 9923 / NRRL Y-1056</strain>
    </source>
</reference>
<reference key="2">
    <citation type="journal article" date="2013" name="G3 (Bethesda)">
        <title>Genomes of Ashbya fungi isolated from insects reveal four mating-type loci, numerous translocations, lack of transposons, and distinct gene duplications.</title>
        <authorList>
            <person name="Dietrich F.S."/>
            <person name="Voegeli S."/>
            <person name="Kuo S."/>
            <person name="Philippsen P."/>
        </authorList>
    </citation>
    <scope>GENOME REANNOTATION</scope>
    <scope>SEQUENCE REVISION TO N-TERMINUS</scope>
    <source>
        <strain>ATCC 10895 / CBS 109.51 / FGSC 9923 / NRRL Y-1056</strain>
    </source>
</reference>
<accession>Q75A69</accession>
<organism>
    <name type="scientific">Eremothecium gossypii (strain ATCC 10895 / CBS 109.51 / FGSC 9923 / NRRL Y-1056)</name>
    <name type="common">Yeast</name>
    <name type="synonym">Ashbya gossypii</name>
    <dbReference type="NCBI Taxonomy" id="284811"/>
    <lineage>
        <taxon>Eukaryota</taxon>
        <taxon>Fungi</taxon>
        <taxon>Dikarya</taxon>
        <taxon>Ascomycota</taxon>
        <taxon>Saccharomycotina</taxon>
        <taxon>Saccharomycetes</taxon>
        <taxon>Saccharomycetales</taxon>
        <taxon>Saccharomycetaceae</taxon>
        <taxon>Eremothecium</taxon>
    </lineage>
</organism>
<sequence>MLGLRLPVCRRAVMASPRACWRLWHSSTAAAAGMQDLSAVLQRNLALRNQSLYNQSSDTIRCSMFDSDGALIGGAAADIRREELIQKHGLLPRDLRKIEMARRHDLVPIVLVRDRCIMVSLLTIRALVKSDTVLLFDPMGIGMDSVAHTRFVADLQTRLKNQGAPGLGKDPLPYEFRALESIFITALANLTAELRVHLAVTKGALHDLEYGIDKDKLKFLLVQNKKLSVFHKKSLLMREMMDDLMDQDDVLSEMYLSEKMRGKPRDVADHSELEMVLETYYTQVNEIVQSIEGAIANVRTTEEIINIILDSNRNELMLLGLRFAIGLLSLGSVMFVAALYGMNLENFIEEGNVGFALVTATGLVLMVCLFRYSIKRLHKLQKMTLLGGQGRHS</sequence>
<gene>
    <name type="primary">LPE10</name>
    <name type="ordered locus">ADR049W</name>
</gene>
<dbReference type="EMBL" id="AE016817">
    <property type="protein sequence ID" value="AAS51969.2"/>
    <property type="molecule type" value="Genomic_DNA"/>
</dbReference>
<dbReference type="RefSeq" id="NP_984145.2">
    <property type="nucleotide sequence ID" value="NM_209498.2"/>
</dbReference>
<dbReference type="SMR" id="Q75A69"/>
<dbReference type="FunCoup" id="Q75A69">
    <property type="interactions" value="340"/>
</dbReference>
<dbReference type="EnsemblFungi" id="AAS51969">
    <property type="protein sequence ID" value="AAS51969"/>
    <property type="gene ID" value="AGOS_ADR049W"/>
</dbReference>
<dbReference type="GeneID" id="4620294"/>
<dbReference type="KEGG" id="ago:AGOS_ADR049W"/>
<dbReference type="eggNOG" id="KOG2662">
    <property type="taxonomic scope" value="Eukaryota"/>
</dbReference>
<dbReference type="HOGENOM" id="CLU_025144_1_0_1"/>
<dbReference type="InParanoid" id="Q75A69"/>
<dbReference type="OMA" id="TRNNCII"/>
<dbReference type="OrthoDB" id="10251508at2759"/>
<dbReference type="Proteomes" id="UP000000591">
    <property type="component" value="Chromosome IV"/>
</dbReference>
<dbReference type="GO" id="GO:0005743">
    <property type="term" value="C:mitochondrial inner membrane"/>
    <property type="evidence" value="ECO:0000318"/>
    <property type="project" value="GO_Central"/>
</dbReference>
<dbReference type="GO" id="GO:0015095">
    <property type="term" value="F:magnesium ion transmembrane transporter activity"/>
    <property type="evidence" value="ECO:0000318"/>
    <property type="project" value="GO_Central"/>
</dbReference>
<dbReference type="GO" id="GO:0045016">
    <property type="term" value="P:mitochondrial magnesium ion transmembrane transport"/>
    <property type="evidence" value="ECO:0000318"/>
    <property type="project" value="GO_Central"/>
</dbReference>
<dbReference type="CDD" id="cd12823">
    <property type="entry name" value="Mrs2_Mfm1p-like"/>
    <property type="match status" value="1"/>
</dbReference>
<dbReference type="FunFam" id="2.40.128.330:FF:000002">
    <property type="entry name" value="Inner membrane magnesium transporter mrs2"/>
    <property type="match status" value="1"/>
</dbReference>
<dbReference type="Gene3D" id="2.40.128.330">
    <property type="match status" value="1"/>
</dbReference>
<dbReference type="Gene3D" id="1.20.58.340">
    <property type="entry name" value="Magnesium transport protein CorA, transmembrane region"/>
    <property type="match status" value="1"/>
</dbReference>
<dbReference type="InterPro" id="IPR039204">
    <property type="entry name" value="MRS2-like"/>
</dbReference>
<dbReference type="PANTHER" id="PTHR13890:SF0">
    <property type="entry name" value="MAGNESIUM TRANSPORTER MRS2 HOMOLOG, MITOCHONDRIAL"/>
    <property type="match status" value="1"/>
</dbReference>
<dbReference type="PANTHER" id="PTHR13890">
    <property type="entry name" value="RNA SPLICING PROTEIN MRS2, MITOCHONDRIAL"/>
    <property type="match status" value="1"/>
</dbReference>
<dbReference type="Pfam" id="PF22099">
    <property type="entry name" value="MRS2-like"/>
    <property type="match status" value="1"/>
</dbReference>
<protein>
    <recommendedName>
        <fullName>Mitochondrial inner membrane magnesium transporter LPE10</fullName>
    </recommendedName>
</protein>
<comment type="function">
    <text evidence="1">Mitochondrial inner membrane magnesium transporter required for mitochondrial magnesium homeostasis. Modulates the conductance of the MRS2 channel. Involved in the splicing of mRNA group II introns in mitochondria by affecting mitochondrial magnesium concentrations, which are critical for group II intron splicing.</text>
</comment>
<comment type="subunit">
    <text evidence="1">Forms homooligomers. Interacts with MRS2.</text>
</comment>
<comment type="subcellular location">
    <subcellularLocation>
        <location evidence="1">Mitochondrion inner membrane</location>
        <topology evidence="1">Multi-pass membrane protein</topology>
    </subcellularLocation>
</comment>
<comment type="similarity">
    <text evidence="3">Belongs to the CorA metal ion transporter (MIT) (TC 1.A.35) family.</text>
</comment>
<keyword id="KW-0406">Ion transport</keyword>
<keyword id="KW-0460">Magnesium</keyword>
<keyword id="KW-0472">Membrane</keyword>
<keyword id="KW-0496">Mitochondrion</keyword>
<keyword id="KW-0999">Mitochondrion inner membrane</keyword>
<keyword id="KW-1185">Reference proteome</keyword>
<keyword id="KW-0809">Transit peptide</keyword>
<keyword id="KW-0812">Transmembrane</keyword>
<keyword id="KW-1133">Transmembrane helix</keyword>
<keyword id="KW-0813">Transport</keyword>
<proteinExistence type="inferred from homology"/>
<evidence type="ECO:0000250" key="1">
    <source>
        <dbReference type="UniProtKB" id="Q02783"/>
    </source>
</evidence>
<evidence type="ECO:0000255" key="2"/>
<evidence type="ECO:0000305" key="3"/>